<organism>
    <name type="scientific">Mycobacterium leprae (strain Br4923)</name>
    <dbReference type="NCBI Taxonomy" id="561304"/>
    <lineage>
        <taxon>Bacteria</taxon>
        <taxon>Bacillati</taxon>
        <taxon>Actinomycetota</taxon>
        <taxon>Actinomycetes</taxon>
        <taxon>Mycobacteriales</taxon>
        <taxon>Mycobacteriaceae</taxon>
        <taxon>Mycobacterium</taxon>
    </lineage>
</organism>
<name>LSPA_MYCLB</name>
<accession>B8ZR76</accession>
<comment type="function">
    <text evidence="1">This protein specifically catalyzes the removal of signal peptides from prolipoproteins.</text>
</comment>
<comment type="catalytic activity">
    <reaction evidence="1">
        <text>Release of signal peptides from bacterial membrane prolipoproteins. Hydrolyzes -Xaa-Yaa-Zaa-|-(S,diacylglyceryl)Cys-, in which Xaa is hydrophobic (preferably Leu), and Yaa (Ala or Ser) and Zaa (Gly or Ala) have small, neutral side chains.</text>
        <dbReference type="EC" id="3.4.23.36"/>
    </reaction>
</comment>
<comment type="pathway">
    <text evidence="1">Protein modification; lipoprotein biosynthesis (signal peptide cleavage).</text>
</comment>
<comment type="subcellular location">
    <subcellularLocation>
        <location evidence="1">Cell membrane</location>
        <topology evidence="1">Multi-pass membrane protein</topology>
    </subcellularLocation>
</comment>
<comment type="similarity">
    <text evidence="1">Belongs to the peptidase A8 family.</text>
</comment>
<feature type="chain" id="PRO_1000123502" description="Lipoprotein signal peptidase">
    <location>
        <begin position="1"/>
        <end position="201"/>
    </location>
</feature>
<feature type="transmembrane region" description="Helical" evidence="1">
    <location>
        <begin position="33"/>
        <end position="53"/>
    </location>
</feature>
<feature type="transmembrane region" description="Helical" evidence="1">
    <location>
        <begin position="86"/>
        <end position="106"/>
    </location>
</feature>
<feature type="transmembrane region" description="Helical" evidence="1">
    <location>
        <begin position="110"/>
        <end position="130"/>
    </location>
</feature>
<feature type="transmembrane region" description="Helical" evidence="1">
    <location>
        <begin position="158"/>
        <end position="178"/>
    </location>
</feature>
<feature type="active site" evidence="1">
    <location>
        <position position="146"/>
    </location>
</feature>
<feature type="active site" evidence="1">
    <location>
        <position position="160"/>
    </location>
</feature>
<gene>
    <name evidence="1" type="primary">lspA</name>
    <name type="ordered locus">MLBr01199</name>
</gene>
<reference key="1">
    <citation type="journal article" date="2009" name="Nat. Genet.">
        <title>Comparative genomic and phylogeographic analysis of Mycobacterium leprae.</title>
        <authorList>
            <person name="Monot M."/>
            <person name="Honore N."/>
            <person name="Garnier T."/>
            <person name="Zidane N."/>
            <person name="Sherafi D."/>
            <person name="Paniz-Mondolfi A."/>
            <person name="Matsuoka M."/>
            <person name="Taylor G.M."/>
            <person name="Donoghue H.D."/>
            <person name="Bouwman A."/>
            <person name="Mays S."/>
            <person name="Watson C."/>
            <person name="Lockwood D."/>
            <person name="Khamispour A."/>
            <person name="Dowlati Y."/>
            <person name="Jianping S."/>
            <person name="Rea T.H."/>
            <person name="Vera-Cabrera L."/>
            <person name="Stefani M.M."/>
            <person name="Banu S."/>
            <person name="Macdonald M."/>
            <person name="Sapkota B.R."/>
            <person name="Spencer J.S."/>
            <person name="Thomas J."/>
            <person name="Harshman K."/>
            <person name="Singh P."/>
            <person name="Busso P."/>
            <person name="Gattiker A."/>
            <person name="Rougemont J."/>
            <person name="Brennan P.J."/>
            <person name="Cole S.T."/>
        </authorList>
    </citation>
    <scope>NUCLEOTIDE SEQUENCE [LARGE SCALE GENOMIC DNA]</scope>
    <source>
        <strain>Br4923</strain>
    </source>
</reference>
<keyword id="KW-0064">Aspartyl protease</keyword>
<keyword id="KW-1003">Cell membrane</keyword>
<keyword id="KW-0378">Hydrolase</keyword>
<keyword id="KW-0472">Membrane</keyword>
<keyword id="KW-0645">Protease</keyword>
<keyword id="KW-0812">Transmembrane</keyword>
<keyword id="KW-1133">Transmembrane helix</keyword>
<evidence type="ECO:0000255" key="1">
    <source>
        <dbReference type="HAMAP-Rule" id="MF_00161"/>
    </source>
</evidence>
<proteinExistence type="inferred from homology"/>
<protein>
    <recommendedName>
        <fullName evidence="1">Lipoprotein signal peptidase</fullName>
        <ecNumber evidence="1">3.4.23.36</ecNumber>
    </recommendedName>
    <alternativeName>
        <fullName evidence="1">Prolipoprotein signal peptidase</fullName>
    </alternativeName>
    <alternativeName>
        <fullName evidence="1">Signal peptidase II</fullName>
        <shortName evidence="1">SPase II</shortName>
    </alternativeName>
</protein>
<dbReference type="EC" id="3.4.23.36" evidence="1"/>
<dbReference type="EMBL" id="FM211192">
    <property type="protein sequence ID" value="CAR71294.1"/>
    <property type="molecule type" value="Genomic_DNA"/>
</dbReference>
<dbReference type="SMR" id="B8ZR76"/>
<dbReference type="KEGG" id="mlb:MLBr01199"/>
<dbReference type="HOGENOM" id="CLU_083252_2_2_11"/>
<dbReference type="UniPathway" id="UPA00665"/>
<dbReference type="Proteomes" id="UP000006900">
    <property type="component" value="Chromosome"/>
</dbReference>
<dbReference type="GO" id="GO:0005886">
    <property type="term" value="C:plasma membrane"/>
    <property type="evidence" value="ECO:0007669"/>
    <property type="project" value="UniProtKB-SubCell"/>
</dbReference>
<dbReference type="GO" id="GO:0004190">
    <property type="term" value="F:aspartic-type endopeptidase activity"/>
    <property type="evidence" value="ECO:0007669"/>
    <property type="project" value="UniProtKB-UniRule"/>
</dbReference>
<dbReference type="GO" id="GO:0006508">
    <property type="term" value="P:proteolysis"/>
    <property type="evidence" value="ECO:0007669"/>
    <property type="project" value="UniProtKB-KW"/>
</dbReference>
<dbReference type="HAMAP" id="MF_00161">
    <property type="entry name" value="LspA"/>
    <property type="match status" value="1"/>
</dbReference>
<dbReference type="InterPro" id="IPR001872">
    <property type="entry name" value="Peptidase_A8"/>
</dbReference>
<dbReference type="NCBIfam" id="TIGR00077">
    <property type="entry name" value="lspA"/>
    <property type="match status" value="1"/>
</dbReference>
<dbReference type="PANTHER" id="PTHR33695">
    <property type="entry name" value="LIPOPROTEIN SIGNAL PEPTIDASE"/>
    <property type="match status" value="1"/>
</dbReference>
<dbReference type="PANTHER" id="PTHR33695:SF1">
    <property type="entry name" value="LIPOPROTEIN SIGNAL PEPTIDASE"/>
    <property type="match status" value="1"/>
</dbReference>
<dbReference type="Pfam" id="PF01252">
    <property type="entry name" value="Peptidase_A8"/>
    <property type="match status" value="1"/>
</dbReference>
<dbReference type="PRINTS" id="PR00781">
    <property type="entry name" value="LIPOSIGPTASE"/>
</dbReference>
<dbReference type="PROSITE" id="PS00855">
    <property type="entry name" value="SPASE_II"/>
    <property type="match status" value="1"/>
</dbReference>
<sequence>MMGRVPDGPTGLAALVPSVEEAQAMLPPRRLRLLLSIAAVVLTLDIVTKVLAVKFLLPGKSVSIIGDTVTWTLVRNSGAAFSMATGYTWVLTLIATGVVIGIFWMGRRLVSSWWALGLGMILGGAMGNLVDRFFRAPAPLRGHVVDFLSIGWWPVFNVADPSVVVGAILLVVLSIFGFDFDTVGRRKAEFDIAGQRKAEQR</sequence>